<dbReference type="EMBL" id="HE601320">
    <property type="protein sequence ID" value="CAP26959.2"/>
    <property type="molecule type" value="Genomic_DNA"/>
</dbReference>
<dbReference type="RefSeq" id="XP_045093285.1">
    <property type="nucleotide sequence ID" value="XM_045237259.1"/>
</dbReference>
<dbReference type="SMR" id="A8X2U9"/>
<dbReference type="GeneID" id="8589593"/>
<dbReference type="WormBase" id="CBG06685">
    <property type="protein sequence ID" value="CBP40103"/>
    <property type="gene ID" value="WBGene00028926"/>
</dbReference>
<dbReference type="eggNOG" id="KOG0918">
    <property type="taxonomic scope" value="Eukaryota"/>
</dbReference>
<dbReference type="HOGENOM" id="CLU_032512_2_0_1"/>
<dbReference type="InParanoid" id="A8X2U9"/>
<dbReference type="OMA" id="EWGHPRL"/>
<dbReference type="Proteomes" id="UP000008549">
    <property type="component" value="Unassembled WGS sequence"/>
</dbReference>
<dbReference type="GO" id="GO:0008430">
    <property type="term" value="F:selenium binding"/>
    <property type="evidence" value="ECO:0007669"/>
    <property type="project" value="InterPro"/>
</dbReference>
<dbReference type="InterPro" id="IPR008826">
    <property type="entry name" value="Se-bd"/>
</dbReference>
<dbReference type="PANTHER" id="PTHR23300">
    <property type="entry name" value="METHANETHIOL OXIDASE"/>
    <property type="match status" value="1"/>
</dbReference>
<dbReference type="PANTHER" id="PTHR23300:SF3">
    <property type="entry name" value="SELENIUM-BINDING PROTEIN-RELATED"/>
    <property type="match status" value="1"/>
</dbReference>
<dbReference type="Pfam" id="PF05694">
    <property type="entry name" value="SBP56"/>
    <property type="match status" value="1"/>
</dbReference>
<dbReference type="SUPFAM" id="SSF75011">
    <property type="entry name" value="3-carboxy-cis,cis-mucoante lactonizing enzyme"/>
    <property type="match status" value="1"/>
</dbReference>
<gene>
    <name type="ORF">CBG06685</name>
</gene>
<evidence type="ECO:0000250" key="1">
    <source>
        <dbReference type="UniProtKB" id="Q21950"/>
    </source>
</evidence>
<evidence type="ECO:0000255" key="2"/>
<evidence type="ECO:0000312" key="3">
    <source>
        <dbReference type="EMBL" id="CAP26959.2"/>
    </source>
</evidence>
<protein>
    <recommendedName>
        <fullName evidence="1">Putative selenium-binding protein</fullName>
    </recommendedName>
</protein>
<organism>
    <name type="scientific">Caenorhabditis briggsae</name>
    <dbReference type="NCBI Taxonomy" id="6238"/>
    <lineage>
        <taxon>Eukaryota</taxon>
        <taxon>Metazoa</taxon>
        <taxon>Ecdysozoa</taxon>
        <taxon>Nematoda</taxon>
        <taxon>Chromadorea</taxon>
        <taxon>Rhabditida</taxon>
        <taxon>Rhabditina</taxon>
        <taxon>Rhabditomorpha</taxon>
        <taxon>Rhabditoidea</taxon>
        <taxon>Rhabditidae</taxon>
        <taxon>Peloderinae</taxon>
        <taxon>Caenorhabditis</taxon>
    </lineage>
</organism>
<comment type="similarity">
    <text evidence="2">Belongs to the selenium-binding protein family.</text>
</comment>
<feature type="chain" id="PRO_0000417368" description="Putative selenium-binding protein">
    <location>
        <begin position="1"/>
        <end position="514"/>
    </location>
</feature>
<keyword id="KW-1185">Reference proteome</keyword>
<keyword id="KW-0711">Selenium</keyword>
<reference evidence="3" key="1">
    <citation type="journal article" date="2003" name="PLoS Biol.">
        <title>The genome sequence of Caenorhabditis briggsae: a platform for comparative genomics.</title>
        <authorList>
            <person name="Stein L.D."/>
            <person name="Bao Z."/>
            <person name="Blasiar D."/>
            <person name="Blumenthal T."/>
            <person name="Brent M.R."/>
            <person name="Chen N."/>
            <person name="Chinwalla A."/>
            <person name="Clarke L."/>
            <person name="Clee C."/>
            <person name="Coghlan A."/>
            <person name="Coulson A."/>
            <person name="D'Eustachio P."/>
            <person name="Fitch D.H.A."/>
            <person name="Fulton L.A."/>
            <person name="Fulton R.E."/>
            <person name="Griffiths-Jones S."/>
            <person name="Harris T.W."/>
            <person name="Hillier L.W."/>
            <person name="Kamath R."/>
            <person name="Kuwabara P.E."/>
            <person name="Mardis E.R."/>
            <person name="Marra M.A."/>
            <person name="Miner T.L."/>
            <person name="Minx P."/>
            <person name="Mullikin J.C."/>
            <person name="Plumb R.W."/>
            <person name="Rogers J."/>
            <person name="Schein J.E."/>
            <person name="Sohrmann M."/>
            <person name="Spieth J."/>
            <person name="Stajich J.E."/>
            <person name="Wei C."/>
            <person name="Willey D."/>
            <person name="Wilson R.K."/>
            <person name="Durbin R.M."/>
            <person name="Waterston R.H."/>
        </authorList>
    </citation>
    <scope>NUCLEOTIDE SEQUENCE [LARGE SCALE GENOMIC DNA]</scope>
    <source>
        <strain evidence="3">AF16</strain>
    </source>
</reference>
<proteinExistence type="inferred from homology"/>
<sequence>MGVCISHEYSKPTAQETEIQQQFSNFSKVDERPPMAVEHQMYDYRQAYEEQDDELFAIICCPHSIGFDRDKIALIDLDPTSDTYCTIISEIRLTSNGDEPGRMNWAKSAESLIEMDKLIRKNIIVPCMNSGKIYVIGFDKNKFYMEKSKNIFKLQEIRSDELFRKDVSCPYAVRSLPLKGAPVHVSTMGDRYGHGKGDFVLIDRKTWEIRKKSDPTFSSFGGDFSLQPRHNLLISSEWGHPRLFRDGFQPSELENVSESFGSCLHVWQISPPKLLQSIGLDSFDGSLVISVKFLHNTDCNHAFAISAIGSSIFHLHMNTLSREWQADRVAHVPSLKVENWVSDEMPALLTDMIISMDDRWLYVCGFLHGIVWRFDIQDPFRVSLHGKINLGGVFDSSPEVRIKTSNAMEDRWWLPPETRSLPRGTKFRGGPALMQLSKDGSRLYVCNSFYKAWDGQFYPELISDGGQMVRVDIVDNEMRLNKKFLVDMKDQPNGPFVIRDIKFLDGDCTSDSFL</sequence>
<accession>A8X2U9</accession>
<name>SBP_CAEBR</name>